<comment type="function">
    <text evidence="1">Required for insertion of 4Fe-4S clusters for at least IspG.</text>
</comment>
<comment type="cofactor">
    <cofactor evidence="1">
        <name>iron-sulfur cluster</name>
        <dbReference type="ChEBI" id="CHEBI:30408"/>
    </cofactor>
    <text evidence="1">Binds 1 iron-sulfur cluster per subunit.</text>
</comment>
<comment type="subunit">
    <text evidence="1">Homodimer.</text>
</comment>
<comment type="similarity">
    <text evidence="1">Belongs to the HesB/IscA family.</text>
</comment>
<name>ERPA_PSEP7</name>
<keyword id="KW-0408">Iron</keyword>
<keyword id="KW-0411">Iron-sulfur</keyword>
<keyword id="KW-0479">Metal-binding</keyword>
<feature type="chain" id="PRO_1000068258" description="Iron-sulfur cluster insertion protein ErpA">
    <location>
        <begin position="1"/>
        <end position="116"/>
    </location>
</feature>
<feature type="binding site" evidence="1">
    <location>
        <position position="44"/>
    </location>
    <ligand>
        <name>iron-sulfur cluster</name>
        <dbReference type="ChEBI" id="CHEBI:30408"/>
    </ligand>
</feature>
<feature type="binding site" evidence="1">
    <location>
        <position position="108"/>
    </location>
    <ligand>
        <name>iron-sulfur cluster</name>
        <dbReference type="ChEBI" id="CHEBI:30408"/>
    </ligand>
</feature>
<feature type="binding site" evidence="1">
    <location>
        <position position="110"/>
    </location>
    <ligand>
        <name>iron-sulfur cluster</name>
        <dbReference type="ChEBI" id="CHEBI:30408"/>
    </ligand>
</feature>
<gene>
    <name evidence="1" type="primary">erpA</name>
    <name type="ordered locus">PSPA7_0806</name>
</gene>
<dbReference type="EMBL" id="CP000744">
    <property type="protein sequence ID" value="ABR86506.1"/>
    <property type="molecule type" value="Genomic_DNA"/>
</dbReference>
<dbReference type="RefSeq" id="WP_003085254.1">
    <property type="nucleotide sequence ID" value="NC_009656.1"/>
</dbReference>
<dbReference type="SMR" id="A6UZG6"/>
<dbReference type="GeneID" id="77219168"/>
<dbReference type="KEGG" id="pap:PSPA7_0806"/>
<dbReference type="HOGENOM" id="CLU_069054_5_3_6"/>
<dbReference type="Proteomes" id="UP000001582">
    <property type="component" value="Chromosome"/>
</dbReference>
<dbReference type="GO" id="GO:0005829">
    <property type="term" value="C:cytosol"/>
    <property type="evidence" value="ECO:0007669"/>
    <property type="project" value="TreeGrafter"/>
</dbReference>
<dbReference type="GO" id="GO:0051537">
    <property type="term" value="F:2 iron, 2 sulfur cluster binding"/>
    <property type="evidence" value="ECO:0007669"/>
    <property type="project" value="TreeGrafter"/>
</dbReference>
<dbReference type="GO" id="GO:0051539">
    <property type="term" value="F:4 iron, 4 sulfur cluster binding"/>
    <property type="evidence" value="ECO:0007669"/>
    <property type="project" value="TreeGrafter"/>
</dbReference>
<dbReference type="GO" id="GO:0005506">
    <property type="term" value="F:iron ion binding"/>
    <property type="evidence" value="ECO:0007669"/>
    <property type="project" value="UniProtKB-UniRule"/>
</dbReference>
<dbReference type="GO" id="GO:0016226">
    <property type="term" value="P:iron-sulfur cluster assembly"/>
    <property type="evidence" value="ECO:0007669"/>
    <property type="project" value="UniProtKB-UniRule"/>
</dbReference>
<dbReference type="FunFam" id="2.60.300.12:FF:000002">
    <property type="entry name" value="Iron-sulfur cluster insertion protein ErpA"/>
    <property type="match status" value="1"/>
</dbReference>
<dbReference type="Gene3D" id="2.60.300.12">
    <property type="entry name" value="HesB-like domain"/>
    <property type="match status" value="1"/>
</dbReference>
<dbReference type="HAMAP" id="MF_01380">
    <property type="entry name" value="Fe_S_insert_ErpA"/>
    <property type="match status" value="1"/>
</dbReference>
<dbReference type="InterPro" id="IPR000361">
    <property type="entry name" value="FeS_biogenesis"/>
</dbReference>
<dbReference type="InterPro" id="IPR016092">
    <property type="entry name" value="FeS_cluster_insertion"/>
</dbReference>
<dbReference type="InterPro" id="IPR017870">
    <property type="entry name" value="FeS_cluster_insertion_CS"/>
</dbReference>
<dbReference type="InterPro" id="IPR023063">
    <property type="entry name" value="FeS_cluster_insertion_RrpA"/>
</dbReference>
<dbReference type="InterPro" id="IPR035903">
    <property type="entry name" value="HesB-like_dom_sf"/>
</dbReference>
<dbReference type="NCBIfam" id="TIGR00049">
    <property type="entry name" value="iron-sulfur cluster assembly accessory protein"/>
    <property type="match status" value="1"/>
</dbReference>
<dbReference type="NCBIfam" id="NF010147">
    <property type="entry name" value="PRK13623.1"/>
    <property type="match status" value="1"/>
</dbReference>
<dbReference type="PANTHER" id="PTHR43011">
    <property type="entry name" value="IRON-SULFUR CLUSTER ASSEMBLY 2 HOMOLOG, MITOCHONDRIAL"/>
    <property type="match status" value="1"/>
</dbReference>
<dbReference type="PANTHER" id="PTHR43011:SF1">
    <property type="entry name" value="IRON-SULFUR CLUSTER ASSEMBLY 2 HOMOLOG, MITOCHONDRIAL"/>
    <property type="match status" value="1"/>
</dbReference>
<dbReference type="Pfam" id="PF01521">
    <property type="entry name" value="Fe-S_biosyn"/>
    <property type="match status" value="1"/>
</dbReference>
<dbReference type="SUPFAM" id="SSF89360">
    <property type="entry name" value="HesB-like domain"/>
    <property type="match status" value="1"/>
</dbReference>
<dbReference type="PROSITE" id="PS01152">
    <property type="entry name" value="HESB"/>
    <property type="match status" value="1"/>
</dbReference>
<organism>
    <name type="scientific">Pseudomonas paraeruginosa (strain DSM 24068 / PA7)</name>
    <name type="common">Pseudomonas aeruginosa (strain PA7)</name>
    <dbReference type="NCBI Taxonomy" id="381754"/>
    <lineage>
        <taxon>Bacteria</taxon>
        <taxon>Pseudomonadati</taxon>
        <taxon>Pseudomonadota</taxon>
        <taxon>Gammaproteobacteria</taxon>
        <taxon>Pseudomonadales</taxon>
        <taxon>Pseudomonadaceae</taxon>
        <taxon>Pseudomonas</taxon>
        <taxon>Pseudomonas paraeruginosa</taxon>
    </lineage>
</organism>
<protein>
    <recommendedName>
        <fullName evidence="1">Iron-sulfur cluster insertion protein ErpA</fullName>
    </recommendedName>
</protein>
<proteinExistence type="inferred from homology"/>
<accession>A6UZG6</accession>
<reference key="1">
    <citation type="submission" date="2007-06" db="EMBL/GenBank/DDBJ databases">
        <authorList>
            <person name="Dodson R.J."/>
            <person name="Harkins D."/>
            <person name="Paulsen I.T."/>
        </authorList>
    </citation>
    <scope>NUCLEOTIDE SEQUENCE [LARGE SCALE GENOMIC DNA]</scope>
    <source>
        <strain>DSM 24068 / PA7</strain>
    </source>
</reference>
<evidence type="ECO:0000255" key="1">
    <source>
        <dbReference type="HAMAP-Rule" id="MF_01380"/>
    </source>
</evidence>
<sequence length="116" mass="12484">MSIETFTPTPLLFTPGAANKVKTLIDEEGNPRLKLRVFVTGGGCSGFQYGFTFDEDIADDDTVIERDGVGLVVDPMSFQYLAGSEVDYQEGLEGSRFVIKNPNAATTCGCGQSFSI</sequence>